<reference key="1">
    <citation type="submission" date="1997-02" db="EMBL/GenBank/DDBJ databases">
        <title>Sequencing of a 26 kb region of the Bacillus subtilis genome downstream of spoVJ.</title>
        <authorList>
            <person name="Borchert S."/>
            <person name="Klein C."/>
            <person name="Piksa B."/>
            <person name="Hammelmann M."/>
            <person name="Entian K.-D."/>
        </authorList>
    </citation>
    <scope>NUCLEOTIDE SEQUENCE [GENOMIC DNA]</scope>
</reference>
<reference key="2">
    <citation type="journal article" date="1997" name="Nature">
        <title>The complete genome sequence of the Gram-positive bacterium Bacillus subtilis.</title>
        <authorList>
            <person name="Kunst F."/>
            <person name="Ogasawara N."/>
            <person name="Moszer I."/>
            <person name="Albertini A.M."/>
            <person name="Alloni G."/>
            <person name="Azevedo V."/>
            <person name="Bertero M.G."/>
            <person name="Bessieres P."/>
            <person name="Bolotin A."/>
            <person name="Borchert S."/>
            <person name="Borriss R."/>
            <person name="Boursier L."/>
            <person name="Brans A."/>
            <person name="Braun M."/>
            <person name="Brignell S.C."/>
            <person name="Bron S."/>
            <person name="Brouillet S."/>
            <person name="Bruschi C.V."/>
            <person name="Caldwell B."/>
            <person name="Capuano V."/>
            <person name="Carter N.M."/>
            <person name="Choi S.-K."/>
            <person name="Codani J.-J."/>
            <person name="Connerton I.F."/>
            <person name="Cummings N.J."/>
            <person name="Daniel R.A."/>
            <person name="Denizot F."/>
            <person name="Devine K.M."/>
            <person name="Duesterhoeft A."/>
            <person name="Ehrlich S.D."/>
            <person name="Emmerson P.T."/>
            <person name="Entian K.-D."/>
            <person name="Errington J."/>
            <person name="Fabret C."/>
            <person name="Ferrari E."/>
            <person name="Foulger D."/>
            <person name="Fritz C."/>
            <person name="Fujita M."/>
            <person name="Fujita Y."/>
            <person name="Fuma S."/>
            <person name="Galizzi A."/>
            <person name="Galleron N."/>
            <person name="Ghim S.-Y."/>
            <person name="Glaser P."/>
            <person name="Goffeau A."/>
            <person name="Golightly E.J."/>
            <person name="Grandi G."/>
            <person name="Guiseppi G."/>
            <person name="Guy B.J."/>
            <person name="Haga K."/>
            <person name="Haiech J."/>
            <person name="Harwood C.R."/>
            <person name="Henaut A."/>
            <person name="Hilbert H."/>
            <person name="Holsappel S."/>
            <person name="Hosono S."/>
            <person name="Hullo M.-F."/>
            <person name="Itaya M."/>
            <person name="Jones L.-M."/>
            <person name="Joris B."/>
            <person name="Karamata D."/>
            <person name="Kasahara Y."/>
            <person name="Klaerr-Blanchard M."/>
            <person name="Klein C."/>
            <person name="Kobayashi Y."/>
            <person name="Koetter P."/>
            <person name="Koningstein G."/>
            <person name="Krogh S."/>
            <person name="Kumano M."/>
            <person name="Kurita K."/>
            <person name="Lapidus A."/>
            <person name="Lardinois S."/>
            <person name="Lauber J."/>
            <person name="Lazarevic V."/>
            <person name="Lee S.-M."/>
            <person name="Levine A."/>
            <person name="Liu H."/>
            <person name="Masuda S."/>
            <person name="Mauel C."/>
            <person name="Medigue C."/>
            <person name="Medina N."/>
            <person name="Mellado R.P."/>
            <person name="Mizuno M."/>
            <person name="Moestl D."/>
            <person name="Nakai S."/>
            <person name="Noback M."/>
            <person name="Noone D."/>
            <person name="O'Reilly M."/>
            <person name="Ogawa K."/>
            <person name="Ogiwara A."/>
            <person name="Oudega B."/>
            <person name="Park S.-H."/>
            <person name="Parro V."/>
            <person name="Pohl T.M."/>
            <person name="Portetelle D."/>
            <person name="Porwollik S."/>
            <person name="Prescott A.M."/>
            <person name="Presecan E."/>
            <person name="Pujic P."/>
            <person name="Purnelle B."/>
            <person name="Rapoport G."/>
            <person name="Rey M."/>
            <person name="Reynolds S."/>
            <person name="Rieger M."/>
            <person name="Rivolta C."/>
            <person name="Rocha E."/>
            <person name="Roche B."/>
            <person name="Rose M."/>
            <person name="Sadaie Y."/>
            <person name="Sato T."/>
            <person name="Scanlan E."/>
            <person name="Schleich S."/>
            <person name="Schroeter R."/>
            <person name="Scoffone F."/>
            <person name="Sekiguchi J."/>
            <person name="Sekowska A."/>
            <person name="Seror S.J."/>
            <person name="Serror P."/>
            <person name="Shin B.-S."/>
            <person name="Soldo B."/>
            <person name="Sorokin A."/>
            <person name="Tacconi E."/>
            <person name="Takagi T."/>
            <person name="Takahashi H."/>
            <person name="Takemaru K."/>
            <person name="Takeuchi M."/>
            <person name="Tamakoshi A."/>
            <person name="Tanaka T."/>
            <person name="Terpstra P."/>
            <person name="Tognoni A."/>
            <person name="Tosato V."/>
            <person name="Uchiyama S."/>
            <person name="Vandenbol M."/>
            <person name="Vannier F."/>
            <person name="Vassarotti A."/>
            <person name="Viari A."/>
            <person name="Wambutt R."/>
            <person name="Wedler E."/>
            <person name="Wedler H."/>
            <person name="Weitzenegger T."/>
            <person name="Winters P."/>
            <person name="Wipat A."/>
            <person name="Yamamoto H."/>
            <person name="Yamane K."/>
            <person name="Yasumoto K."/>
            <person name="Yata K."/>
            <person name="Yoshida K."/>
            <person name="Yoshikawa H.-F."/>
            <person name="Zumstein E."/>
            <person name="Yoshikawa H."/>
            <person name="Danchin A."/>
        </authorList>
    </citation>
    <scope>NUCLEOTIDE SEQUENCE [LARGE SCALE GENOMIC DNA]</scope>
    <source>
        <strain>168</strain>
    </source>
</reference>
<reference key="3">
    <citation type="journal article" date="1985" name="Nucleic Acids Res.">
        <title>Nucleotide sequence of the Bacillus subtilis xylose isomerase gene: extensive homology between the Bacillus and Escherichia coli enzyme.</title>
        <authorList>
            <person name="Wilhelm M."/>
            <person name="Hollenberg C.P."/>
        </authorList>
    </citation>
    <scope>NUCLEOTIDE SEQUENCE [GENOMIC DNA] OF 1-8</scope>
</reference>
<organism>
    <name type="scientific">Bacillus subtilis (strain 168)</name>
    <dbReference type="NCBI Taxonomy" id="224308"/>
    <lineage>
        <taxon>Bacteria</taxon>
        <taxon>Bacillati</taxon>
        <taxon>Bacillota</taxon>
        <taxon>Bacilli</taxon>
        <taxon>Bacillales</taxon>
        <taxon>Bacillaceae</taxon>
        <taxon>Bacillus</taxon>
    </lineage>
</organism>
<comment type="function">
    <text evidence="1">Catalyzes the phosphorylation of D-xylulose to D-xylulose 5-phosphate.</text>
</comment>
<comment type="catalytic activity">
    <reaction evidence="1">
        <text>D-xylulose + ATP = D-xylulose 5-phosphate + ADP + H(+)</text>
        <dbReference type="Rhea" id="RHEA:10964"/>
        <dbReference type="ChEBI" id="CHEBI:15378"/>
        <dbReference type="ChEBI" id="CHEBI:17140"/>
        <dbReference type="ChEBI" id="CHEBI:30616"/>
        <dbReference type="ChEBI" id="CHEBI:57737"/>
        <dbReference type="ChEBI" id="CHEBI:456216"/>
        <dbReference type="EC" id="2.7.1.17"/>
    </reaction>
</comment>
<comment type="similarity">
    <text evidence="1 2">Belongs to the FGGY kinase family.</text>
</comment>
<name>XYLB_BACSU</name>
<gene>
    <name evidence="1" type="primary">xylB</name>
    <name type="synonym">yncA</name>
    <name type="ordered locus">BSU17610</name>
</gene>
<proteinExistence type="inferred from homology"/>
<dbReference type="EC" id="2.7.1.17" evidence="1"/>
<dbReference type="EMBL" id="U66480">
    <property type="protein sequence ID" value="AAB41094.1"/>
    <property type="molecule type" value="Genomic_DNA"/>
</dbReference>
<dbReference type="EMBL" id="AL009126">
    <property type="protein sequence ID" value="CAB13645.1"/>
    <property type="molecule type" value="Genomic_DNA"/>
</dbReference>
<dbReference type="EMBL" id="X02795">
    <property type="protein sequence ID" value="CAA26563.1"/>
    <property type="molecule type" value="Genomic_DNA"/>
</dbReference>
<dbReference type="PIR" id="D69735">
    <property type="entry name" value="D69735"/>
</dbReference>
<dbReference type="RefSeq" id="NP_389643.1">
    <property type="nucleotide sequence ID" value="NC_000964.3"/>
</dbReference>
<dbReference type="RefSeq" id="WP_003245233.1">
    <property type="nucleotide sequence ID" value="NZ_OZ025638.1"/>
</dbReference>
<dbReference type="SMR" id="P39211"/>
<dbReference type="FunCoup" id="P39211">
    <property type="interactions" value="152"/>
</dbReference>
<dbReference type="STRING" id="224308.BSU17610"/>
<dbReference type="PaxDb" id="224308-BSU17610"/>
<dbReference type="DNASU" id="939560"/>
<dbReference type="EnsemblBacteria" id="CAB13645">
    <property type="protein sequence ID" value="CAB13645"/>
    <property type="gene ID" value="BSU_17610"/>
</dbReference>
<dbReference type="GeneID" id="939560"/>
<dbReference type="KEGG" id="bsu:BSU17610"/>
<dbReference type="PATRIC" id="fig|224308.179.peg.1911"/>
<dbReference type="eggNOG" id="COG1070">
    <property type="taxonomic scope" value="Bacteria"/>
</dbReference>
<dbReference type="InParanoid" id="P39211"/>
<dbReference type="OrthoDB" id="9805576at2"/>
<dbReference type="PhylomeDB" id="P39211"/>
<dbReference type="BioCyc" id="BSUB:BSU17610-MONOMER"/>
<dbReference type="Proteomes" id="UP000001570">
    <property type="component" value="Chromosome"/>
</dbReference>
<dbReference type="GO" id="GO:0005524">
    <property type="term" value="F:ATP binding"/>
    <property type="evidence" value="ECO:0007669"/>
    <property type="project" value="UniProtKB-UniRule"/>
</dbReference>
<dbReference type="GO" id="GO:0004856">
    <property type="term" value="F:D-xylulokinase activity"/>
    <property type="evidence" value="ECO:0007669"/>
    <property type="project" value="UniProtKB-UniRule"/>
</dbReference>
<dbReference type="GO" id="GO:0042732">
    <property type="term" value="P:D-xylose metabolic process"/>
    <property type="evidence" value="ECO:0007669"/>
    <property type="project" value="UniProtKB-KW"/>
</dbReference>
<dbReference type="GO" id="GO:0005998">
    <property type="term" value="P:xylulose catabolic process"/>
    <property type="evidence" value="ECO:0007669"/>
    <property type="project" value="UniProtKB-UniRule"/>
</dbReference>
<dbReference type="CDD" id="cd07808">
    <property type="entry name" value="ASKHA_NBD_FGGY_EcXK-like"/>
    <property type="match status" value="1"/>
</dbReference>
<dbReference type="Gene3D" id="3.30.420.40">
    <property type="match status" value="2"/>
</dbReference>
<dbReference type="HAMAP" id="MF_02220">
    <property type="entry name" value="XylB"/>
    <property type="match status" value="1"/>
</dbReference>
<dbReference type="InterPro" id="IPR043129">
    <property type="entry name" value="ATPase_NBD"/>
</dbReference>
<dbReference type="InterPro" id="IPR000577">
    <property type="entry name" value="Carb_kinase_FGGY"/>
</dbReference>
<dbReference type="InterPro" id="IPR018483">
    <property type="entry name" value="Carb_kinase_FGGY_CS"/>
</dbReference>
<dbReference type="InterPro" id="IPR018485">
    <property type="entry name" value="FGGY_C"/>
</dbReference>
<dbReference type="InterPro" id="IPR050406">
    <property type="entry name" value="FGGY_Carb_Kinase"/>
</dbReference>
<dbReference type="InterPro" id="IPR018484">
    <property type="entry name" value="FGGY_N"/>
</dbReference>
<dbReference type="InterPro" id="IPR006000">
    <property type="entry name" value="Xylulokinase"/>
</dbReference>
<dbReference type="NCBIfam" id="TIGR01312">
    <property type="entry name" value="XylB"/>
    <property type="match status" value="1"/>
</dbReference>
<dbReference type="PANTHER" id="PTHR43095">
    <property type="entry name" value="SUGAR KINASE"/>
    <property type="match status" value="1"/>
</dbReference>
<dbReference type="PANTHER" id="PTHR43095:SF5">
    <property type="entry name" value="XYLULOSE KINASE"/>
    <property type="match status" value="1"/>
</dbReference>
<dbReference type="Pfam" id="PF02782">
    <property type="entry name" value="FGGY_C"/>
    <property type="match status" value="1"/>
</dbReference>
<dbReference type="Pfam" id="PF00370">
    <property type="entry name" value="FGGY_N"/>
    <property type="match status" value="1"/>
</dbReference>
<dbReference type="PIRSF" id="PIRSF000538">
    <property type="entry name" value="GlpK"/>
    <property type="match status" value="1"/>
</dbReference>
<dbReference type="SUPFAM" id="SSF53067">
    <property type="entry name" value="Actin-like ATPase domain"/>
    <property type="match status" value="2"/>
</dbReference>
<dbReference type="PROSITE" id="PS00933">
    <property type="entry name" value="FGGY_KINASES_1"/>
    <property type="match status" value="1"/>
</dbReference>
<dbReference type="PROSITE" id="PS00445">
    <property type="entry name" value="FGGY_KINASES_2"/>
    <property type="match status" value="1"/>
</dbReference>
<feature type="chain" id="PRO_0000059548" description="Xylulose kinase">
    <location>
        <begin position="1"/>
        <end position="499"/>
    </location>
</feature>
<feature type="active site" description="Proton acceptor" evidence="1">
    <location>
        <position position="239"/>
    </location>
</feature>
<feature type="binding site" evidence="1">
    <location>
        <begin position="81"/>
        <end position="82"/>
    </location>
    <ligand>
        <name>substrate</name>
    </ligand>
</feature>
<feature type="site" description="Important for activity" evidence="1">
    <location>
        <position position="8"/>
    </location>
</feature>
<accession>P39211</accession>
<evidence type="ECO:0000255" key="1">
    <source>
        <dbReference type="HAMAP-Rule" id="MF_02220"/>
    </source>
</evidence>
<evidence type="ECO:0000305" key="2"/>
<sequence length="499" mass="55417">MKYVIGIDLGTSAVKTILVNQNGKVCAETSKRYPLIQEKAGYSEQNPEDWVQQTIEALAELVSISNVQAKDIDGISYSGQMHGLVLLDQDRQVLRNAILWNDTRTTPQCIRMTEKFGDHLLDITKNRVLEGFTLPKMLWVKEHEPELFKKTAVFLLPKDYVRFRMTGVIHTEYSDAAGTLLLHITRKEWSNDICNQIGISADICPPLVESHDCVGSLLPHVAAKTGLLEKTKVYAGGADNACGAIGAGILSSGKTLCSIGTSGVILSYEEEKERDFKGKVHFFNHGKKDSFYTMGVTLAAGYSLDWFKRTFAPNESFEQLLQGVEAIPIGANGLLYTPYLVGERTPHADSSIRGSLIGMDGAHNRKHFLRAIMEGITFSLHESIELFREAGKSVHTVVSIGGGAKNDTWLQMQADIFNTRVIKLENEQGPAMGAAMLAAFGSGWFESLEECAEQFIREAAAFYPKAQNVQKYKTLFDLYKNIYTHTKDLNTALKSFRKN</sequence>
<protein>
    <recommendedName>
        <fullName evidence="1">Xylulose kinase</fullName>
        <shortName evidence="1">Xylulokinase</shortName>
        <ecNumber evidence="1">2.7.1.17</ecNumber>
    </recommendedName>
</protein>
<keyword id="KW-0067">ATP-binding</keyword>
<keyword id="KW-0119">Carbohydrate metabolism</keyword>
<keyword id="KW-0418">Kinase</keyword>
<keyword id="KW-0547">Nucleotide-binding</keyword>
<keyword id="KW-1185">Reference proteome</keyword>
<keyword id="KW-0808">Transferase</keyword>
<keyword id="KW-0859">Xylose metabolism</keyword>